<gene>
    <name type="ordered locus">CLK_1817</name>
</gene>
<evidence type="ECO:0000255" key="1">
    <source>
        <dbReference type="HAMAP-Rule" id="MF_00048"/>
    </source>
</evidence>
<protein>
    <recommendedName>
        <fullName evidence="1">UPF0102 protein CLK_1817</fullName>
    </recommendedName>
</protein>
<dbReference type="EMBL" id="CP000962">
    <property type="protein sequence ID" value="ACA56097.1"/>
    <property type="molecule type" value="Genomic_DNA"/>
</dbReference>
<dbReference type="RefSeq" id="WP_012344000.1">
    <property type="nucleotide sequence ID" value="NC_010520.1"/>
</dbReference>
<dbReference type="SMR" id="B1KWN0"/>
<dbReference type="KEGG" id="cbl:CLK_1817"/>
<dbReference type="HOGENOM" id="CLU_115353_3_1_9"/>
<dbReference type="GO" id="GO:0003676">
    <property type="term" value="F:nucleic acid binding"/>
    <property type="evidence" value="ECO:0007669"/>
    <property type="project" value="InterPro"/>
</dbReference>
<dbReference type="CDD" id="cd20736">
    <property type="entry name" value="PoNe_Nuclease"/>
    <property type="match status" value="1"/>
</dbReference>
<dbReference type="Gene3D" id="3.40.1350.10">
    <property type="match status" value="1"/>
</dbReference>
<dbReference type="HAMAP" id="MF_00048">
    <property type="entry name" value="UPF0102"/>
    <property type="match status" value="1"/>
</dbReference>
<dbReference type="InterPro" id="IPR011335">
    <property type="entry name" value="Restrct_endonuc-II-like"/>
</dbReference>
<dbReference type="InterPro" id="IPR011856">
    <property type="entry name" value="tRNA_endonuc-like_dom_sf"/>
</dbReference>
<dbReference type="InterPro" id="IPR003509">
    <property type="entry name" value="UPF0102_YraN-like"/>
</dbReference>
<dbReference type="NCBIfam" id="NF009150">
    <property type="entry name" value="PRK12497.1-3"/>
    <property type="match status" value="1"/>
</dbReference>
<dbReference type="NCBIfam" id="NF009154">
    <property type="entry name" value="PRK12497.3-3"/>
    <property type="match status" value="1"/>
</dbReference>
<dbReference type="NCBIfam" id="TIGR00252">
    <property type="entry name" value="YraN family protein"/>
    <property type="match status" value="1"/>
</dbReference>
<dbReference type="PANTHER" id="PTHR34039">
    <property type="entry name" value="UPF0102 PROTEIN YRAN"/>
    <property type="match status" value="1"/>
</dbReference>
<dbReference type="PANTHER" id="PTHR34039:SF1">
    <property type="entry name" value="UPF0102 PROTEIN YRAN"/>
    <property type="match status" value="1"/>
</dbReference>
<dbReference type="Pfam" id="PF02021">
    <property type="entry name" value="UPF0102"/>
    <property type="match status" value="1"/>
</dbReference>
<dbReference type="SUPFAM" id="SSF52980">
    <property type="entry name" value="Restriction endonuclease-like"/>
    <property type="match status" value="1"/>
</dbReference>
<proteinExistence type="inferred from homology"/>
<accession>B1KWN0</accession>
<reference key="1">
    <citation type="journal article" date="2007" name="PLoS ONE">
        <title>Analysis of the neurotoxin complex genes in Clostridium botulinum A1-A4 and B1 strains: BoNT/A3, /Ba4 and /B1 clusters are located within plasmids.</title>
        <authorList>
            <person name="Smith T.J."/>
            <person name="Hill K.K."/>
            <person name="Foley B.T."/>
            <person name="Detter J.C."/>
            <person name="Munk A.C."/>
            <person name="Bruce D.C."/>
            <person name="Doggett N.A."/>
            <person name="Smith L.A."/>
            <person name="Marks J.D."/>
            <person name="Xie G."/>
            <person name="Brettin T.S."/>
        </authorList>
    </citation>
    <scope>NUCLEOTIDE SEQUENCE [LARGE SCALE GENOMIC DNA]</scope>
    <source>
        <strain>Loch Maree / Type A3</strain>
    </source>
</reference>
<comment type="similarity">
    <text evidence="1">Belongs to the UPF0102 family.</text>
</comment>
<feature type="chain" id="PRO_1000091234" description="UPF0102 protein CLK_1817">
    <location>
        <begin position="1"/>
        <end position="123"/>
    </location>
</feature>
<name>Y1817_CLOBM</name>
<sequence length="123" mass="14458">MHYCNKDIGSFGETIAADYIKNSGYIILERNFRCKLGEIDIIAKDKNFIVFIEVKTRYGYIYGSPSEAITFRKQNKIYKTAQLYIMKKAIHNKFYFRFDVIEVILNTLNSNYSVKLIKNAFQI</sequence>
<organism>
    <name type="scientific">Clostridium botulinum (strain Loch Maree / Type A3)</name>
    <dbReference type="NCBI Taxonomy" id="498214"/>
    <lineage>
        <taxon>Bacteria</taxon>
        <taxon>Bacillati</taxon>
        <taxon>Bacillota</taxon>
        <taxon>Clostridia</taxon>
        <taxon>Eubacteriales</taxon>
        <taxon>Clostridiaceae</taxon>
        <taxon>Clostridium</taxon>
    </lineage>
</organism>